<reference key="1">
    <citation type="submission" date="2009-08" db="EMBL/GenBank/DDBJ databases">
        <title>Complete sequence of chromosome of Methanocaldococcus fervens AG86.</title>
        <authorList>
            <consortium name="US DOE Joint Genome Institute"/>
            <person name="Lucas S."/>
            <person name="Copeland A."/>
            <person name="Lapidus A."/>
            <person name="Glavina del Rio T."/>
            <person name="Tice H."/>
            <person name="Bruce D."/>
            <person name="Goodwin L."/>
            <person name="Pitluck S."/>
            <person name="Chertkov O."/>
            <person name="Detter J.C."/>
            <person name="Han C."/>
            <person name="Tapia R."/>
            <person name="Larimer F."/>
            <person name="Land M."/>
            <person name="Hauser L."/>
            <person name="Kyrpides N."/>
            <person name="Ovchinnikova G."/>
            <person name="Lupa-Sieprawska M."/>
            <person name="Whitman W.B."/>
        </authorList>
    </citation>
    <scope>NUCLEOTIDE SEQUENCE [LARGE SCALE GENOMIC DNA]</scope>
    <source>
        <strain>DSM 4213 / JCM 15782 / AG86</strain>
    </source>
</reference>
<reference key="2">
    <citation type="journal article" date="2014" name="Biochemistry">
        <title>Identification and characterization of a tyramine-glutamate ligase (MfnD) involved in methanofuran biosynthesis.</title>
        <authorList>
            <person name="Wang Y."/>
            <person name="Xu H."/>
            <person name="Harich K.C."/>
            <person name="White R.H."/>
        </authorList>
    </citation>
    <scope>FUNCTION</scope>
    <scope>CATALYTIC ACTIVITY</scope>
    <scope>BIOPHYSICOCHEMICAL PROPERTIES</scope>
    <scope>SUBSTRATE SPECIFICITY</scope>
    <scope>COFACTOR</scope>
    <scope>MUTAGENESIS OF GLU-21; ARG-251 AND THR-253</scope>
    <source>
        <strain>DSM 4213 / JCM 15782 / AG86</strain>
    </source>
</reference>
<proteinExistence type="evidence at protein level"/>
<sequence>MILFFEYAIASGFEDEGILEEGKMMFNTLLNQFLEIDNVTSLIHKDFADDYKDFENLKIVEIEDDKDIEIKLNDILKNEKIDYALTIAPEDENILYNLTKIIEKYPVKNLGCSSNAIKVAGDKYLTYLTIKDYVKTPKTFKPKKYVIKKIDGCGGKFNLFDENFLIQEFVEGESLSVSLIVGKKIYPLSLNRQYIDERGFVGGEVNIKHRLKDEIFNEAIKAVKCIDGLNGYVGVDVIVNDEIYIIEINPRITTTIYGLKTEPSLAELLIKNANNEELTFKVEGKEFTINK</sequence>
<organism>
    <name type="scientific">Methanocaldococcus fervens (strain DSM 4213 / JCM 15782 / AG86)</name>
    <name type="common">Methanococcus fervens</name>
    <dbReference type="NCBI Taxonomy" id="573064"/>
    <lineage>
        <taxon>Archaea</taxon>
        <taxon>Methanobacteriati</taxon>
        <taxon>Methanobacteriota</taxon>
        <taxon>Methanomada group</taxon>
        <taxon>Methanococci</taxon>
        <taxon>Methanococcales</taxon>
        <taxon>Methanocaldococcaceae</taxon>
        <taxon>Methanocaldococcus</taxon>
    </lineage>
</organism>
<name>MFND_METFA</name>
<feature type="chain" id="PRO_0000432374" description="Tyramine--L-glutamate ligase">
    <location>
        <begin position="1"/>
        <end position="291"/>
    </location>
</feature>
<feature type="domain" description="ATP-grasp" evidence="1">
    <location>
        <begin position="104"/>
        <end position="274"/>
    </location>
</feature>
<feature type="binding site" evidence="1">
    <location>
        <begin position="131"/>
        <end position="176"/>
    </location>
    <ligand>
        <name>ATP</name>
        <dbReference type="ChEBI" id="CHEBI:30616"/>
    </ligand>
</feature>
<feature type="binding site" evidence="1">
    <location>
        <position position="236"/>
    </location>
    <ligand>
        <name>Mg(2+)</name>
        <dbReference type="ChEBI" id="CHEBI:18420"/>
        <label>1</label>
    </ligand>
</feature>
<feature type="binding site" evidence="1">
    <location>
        <position position="236"/>
    </location>
    <ligand>
        <name>Mn(2+)</name>
        <dbReference type="ChEBI" id="CHEBI:29035"/>
        <label>1</label>
    </ligand>
</feature>
<feature type="binding site" evidence="1">
    <location>
        <position position="247"/>
    </location>
    <ligand>
        <name>Mg(2+)</name>
        <dbReference type="ChEBI" id="CHEBI:18420"/>
        <label>1</label>
    </ligand>
</feature>
<feature type="binding site" evidence="1">
    <location>
        <position position="247"/>
    </location>
    <ligand>
        <name>Mg(2+)</name>
        <dbReference type="ChEBI" id="CHEBI:18420"/>
        <label>2</label>
    </ligand>
</feature>
<feature type="binding site" evidence="1">
    <location>
        <position position="247"/>
    </location>
    <ligand>
        <name>Mn(2+)</name>
        <dbReference type="ChEBI" id="CHEBI:29035"/>
        <label>1</label>
    </ligand>
</feature>
<feature type="binding site" evidence="1">
    <location>
        <position position="247"/>
    </location>
    <ligand>
        <name>Mn(2+)</name>
        <dbReference type="ChEBI" id="CHEBI:29035"/>
        <label>2</label>
    </ligand>
</feature>
<feature type="binding site" evidence="1">
    <location>
        <position position="249"/>
    </location>
    <ligand>
        <name>Mg(2+)</name>
        <dbReference type="ChEBI" id="CHEBI:18420"/>
        <label>2</label>
    </ligand>
</feature>
<feature type="binding site" evidence="1">
    <location>
        <position position="249"/>
    </location>
    <ligand>
        <name>Mn(2+)</name>
        <dbReference type="ChEBI" id="CHEBI:29035"/>
        <label>2</label>
    </ligand>
</feature>
<feature type="mutagenesis site" description="30% of wild-type specific activity." evidence="2">
    <original>E</original>
    <variation>Q</variation>
    <location>
        <position position="21"/>
    </location>
</feature>
<feature type="mutagenesis site" description="1% of wild-type specific activity." evidence="2">
    <original>R</original>
    <variation>A</variation>
    <location>
        <position position="251"/>
    </location>
</feature>
<feature type="mutagenesis site" description="30% of wild-type specific activity." evidence="2">
    <original>T</original>
    <variation>V</variation>
    <location>
        <position position="253"/>
    </location>
</feature>
<comment type="function">
    <text evidence="2">Catalyzes the formation of an amide bond between tyramine and the gamma carboxy group of L-glutamate. The enzyme also accepts phenylethylamine in vitro.</text>
</comment>
<comment type="catalytic activity">
    <reaction evidence="2">
        <text>tyramine + L-glutamate + ATP = gamma-L-glutamyltyramine + ADP + phosphate + H(+)</text>
        <dbReference type="Rhea" id="RHEA:43544"/>
        <dbReference type="ChEBI" id="CHEBI:15378"/>
        <dbReference type="ChEBI" id="CHEBI:29985"/>
        <dbReference type="ChEBI" id="CHEBI:30616"/>
        <dbReference type="ChEBI" id="CHEBI:43474"/>
        <dbReference type="ChEBI" id="CHEBI:83425"/>
        <dbReference type="ChEBI" id="CHEBI:327995"/>
        <dbReference type="ChEBI" id="CHEBI:456216"/>
        <dbReference type="EC" id="6.3.4.24"/>
    </reaction>
</comment>
<comment type="cofactor">
    <cofactor evidence="2">
        <name>Mg(2+)</name>
        <dbReference type="ChEBI" id="CHEBI:18420"/>
    </cofactor>
    <cofactor evidence="2">
        <name>Mn(2+)</name>
        <dbReference type="ChEBI" id="CHEBI:29035"/>
    </cofactor>
    <text evidence="1">Binds 2 magnesium or manganese ions per subunit.</text>
</comment>
<comment type="biophysicochemical properties">
    <kinetics>
        <KM evidence="2">0.8 mM for tyramine</KM>
        <KM evidence="2">2.3 mM for L-glutamate</KM>
        <KM evidence="2">1.5 mM for ATP</KM>
        <text evidence="2">kcat is 4.8 sec(-1) toward tyramine. kcat is 5.8 sec(-1) toward L-glutamate. kcat is 5.9 sec(-1) toward ATP.</text>
    </kinetics>
    <phDependence>
        <text evidence="2">Optimum pH is 6.7.</text>
    </phDependence>
</comment>
<comment type="pathway">
    <text evidence="4">Cofactor biosynthesis; methanofuran biosynthesis.</text>
</comment>
<accession>C7P8V7</accession>
<keyword id="KW-0067">ATP-binding</keyword>
<keyword id="KW-0436">Ligase</keyword>
<keyword id="KW-0460">Magnesium</keyword>
<keyword id="KW-0464">Manganese</keyword>
<keyword id="KW-0479">Metal-binding</keyword>
<keyword id="KW-0547">Nucleotide-binding</keyword>
<evidence type="ECO:0000255" key="1">
    <source>
        <dbReference type="PROSITE-ProRule" id="PRU00409"/>
    </source>
</evidence>
<evidence type="ECO:0000269" key="2">
    <source>
    </source>
</evidence>
<evidence type="ECO:0000303" key="3">
    <source>
    </source>
</evidence>
<evidence type="ECO:0000305" key="4">
    <source>
    </source>
</evidence>
<evidence type="ECO:0000312" key="5">
    <source>
        <dbReference type="EMBL" id="ACV24989.1"/>
    </source>
</evidence>
<gene>
    <name evidence="3" type="primary">mfnD</name>
    <name evidence="5" type="ordered locus">Mefer_1180</name>
</gene>
<protein>
    <recommendedName>
        <fullName>Tyramine--L-glutamate ligase</fullName>
        <ecNumber evidence="2">6.3.4.24</ecNumber>
    </recommendedName>
</protein>
<dbReference type="EC" id="6.3.4.24" evidence="2"/>
<dbReference type="EMBL" id="CP001696">
    <property type="protein sequence ID" value="ACV24989.1"/>
    <property type="molecule type" value="Genomic_DNA"/>
</dbReference>
<dbReference type="RefSeq" id="WP_015791725.1">
    <property type="nucleotide sequence ID" value="NC_013156.1"/>
</dbReference>
<dbReference type="SMR" id="C7P8V7"/>
<dbReference type="STRING" id="573064.Mefer_1180"/>
<dbReference type="GeneID" id="8365882"/>
<dbReference type="KEGG" id="mfe:Mefer_1180"/>
<dbReference type="eggNOG" id="arCOG01592">
    <property type="taxonomic scope" value="Archaea"/>
</dbReference>
<dbReference type="HOGENOM" id="CLU_059501_1_1_2"/>
<dbReference type="OrthoDB" id="133985at2157"/>
<dbReference type="BioCyc" id="MetaCyc:MONOMER-18939"/>
<dbReference type="BRENDA" id="6.3.4.24">
    <property type="organism ID" value="12857"/>
</dbReference>
<dbReference type="UniPathway" id="UPA00080"/>
<dbReference type="Proteomes" id="UP000001495">
    <property type="component" value="Chromosome"/>
</dbReference>
<dbReference type="GO" id="GO:0005524">
    <property type="term" value="F:ATP binding"/>
    <property type="evidence" value="ECO:0007669"/>
    <property type="project" value="UniProtKB-KW"/>
</dbReference>
<dbReference type="GO" id="GO:0016874">
    <property type="term" value="F:ligase activity"/>
    <property type="evidence" value="ECO:0007669"/>
    <property type="project" value="UniProtKB-KW"/>
</dbReference>
<dbReference type="GO" id="GO:0046872">
    <property type="term" value="F:metal ion binding"/>
    <property type="evidence" value="ECO:0007669"/>
    <property type="project" value="UniProtKB-KW"/>
</dbReference>
<dbReference type="Gene3D" id="2.30.36.100">
    <property type="match status" value="1"/>
</dbReference>
<dbReference type="Gene3D" id="3.40.50.11770">
    <property type="match status" value="1"/>
</dbReference>
<dbReference type="Gene3D" id="3.30.470.20">
    <property type="entry name" value="ATP-grasp fold, B domain"/>
    <property type="match status" value="1"/>
</dbReference>
<dbReference type="InterPro" id="IPR011761">
    <property type="entry name" value="ATP-grasp"/>
</dbReference>
<dbReference type="InterPro" id="IPR003806">
    <property type="entry name" value="ATP-grasp_PylC-type"/>
</dbReference>
<dbReference type="InterPro" id="IPR005479">
    <property type="entry name" value="CbamoylP_synth_lsu-like_ATP-bd"/>
</dbReference>
<dbReference type="InterPro" id="IPR024710">
    <property type="entry name" value="MfnD"/>
</dbReference>
<dbReference type="InterPro" id="IPR040803">
    <property type="entry name" value="MfnD_preATP-grasp"/>
</dbReference>
<dbReference type="InterPro" id="IPR053510">
    <property type="entry name" value="Tyramine-Glutamate_Synthase"/>
</dbReference>
<dbReference type="NCBIfam" id="NF040722">
    <property type="entry name" value="MfnD_Meth"/>
    <property type="match status" value="1"/>
</dbReference>
<dbReference type="Pfam" id="PF02655">
    <property type="entry name" value="ATP-grasp_3"/>
    <property type="match status" value="1"/>
</dbReference>
<dbReference type="Pfam" id="PF18301">
    <property type="entry name" value="preATP-grasp_3"/>
    <property type="match status" value="1"/>
</dbReference>
<dbReference type="PIRSF" id="PIRSF016766">
    <property type="entry name" value="UCP016766_ATPgrasp"/>
    <property type="match status" value="1"/>
</dbReference>
<dbReference type="SUPFAM" id="SSF56059">
    <property type="entry name" value="Glutathione synthetase ATP-binding domain-like"/>
    <property type="match status" value="1"/>
</dbReference>
<dbReference type="PROSITE" id="PS50975">
    <property type="entry name" value="ATP_GRASP"/>
    <property type="match status" value="1"/>
</dbReference>
<dbReference type="PROSITE" id="PS00867">
    <property type="entry name" value="CPSASE_2"/>
    <property type="match status" value="1"/>
</dbReference>